<reference key="1">
    <citation type="journal article" date="1995" name="Int. J. Syst. Bacteriol.">
        <title>Comparative ribosomal protein sequence analyses of a phylogenetically defined genus, Pseudomonas, and its relatives.</title>
        <authorList>
            <person name="Ochi K."/>
        </authorList>
    </citation>
    <scope>PROTEIN SEQUENCE</scope>
    <source>
        <strain>ATCC 25411 / DSM 50017 / CCUG 1781 / CIP 75.21 / JCM 5966 / NBRC 14162 / NCTC 10897 / NCIMB 10541 / VKM B-972</strain>
    </source>
</reference>
<accession>Q9R5V9</accession>
<comment type="subunit">
    <text evidence="1">Part of the 50S ribosomal subunit.</text>
</comment>
<comment type="similarity">
    <text evidence="2">Belongs to the universal ribosomal protein uL30 family.</text>
</comment>
<feature type="chain" id="PRO_0000224006" description="Large ribosomal subunit protein uL30">
    <location>
        <begin position="1"/>
        <end position="24" status="greater than"/>
    </location>
</feature>
<feature type="non-terminal residue">
    <location>
        <position position="24"/>
    </location>
</feature>
<evidence type="ECO:0000250" key="1"/>
<evidence type="ECO:0000305" key="2"/>
<organism>
    <name type="scientific">Ectopseudomonas mendocina</name>
    <name type="common">Pseudomonas mendocina</name>
    <dbReference type="NCBI Taxonomy" id="300"/>
    <lineage>
        <taxon>Bacteria</taxon>
        <taxon>Pseudomonadati</taxon>
        <taxon>Pseudomonadota</taxon>
        <taxon>Gammaproteobacteria</taxon>
        <taxon>Pseudomonadales</taxon>
        <taxon>Pseudomonadaceae</taxon>
        <taxon>Ectopseudomonas</taxon>
    </lineage>
</organism>
<protein>
    <recommendedName>
        <fullName evidence="2">Large ribosomal subunit protein uL30</fullName>
    </recommendedName>
    <alternativeName>
        <fullName>50S ribosomal protein L30</fullName>
    </alternativeName>
</protein>
<proteinExistence type="evidence at protein level"/>
<sequence>ANTVKVTLIKSTNGRLANHKAXVK</sequence>
<gene>
    <name type="primary">rpmD</name>
</gene>
<keyword id="KW-0903">Direct protein sequencing</keyword>
<keyword id="KW-0687">Ribonucleoprotein</keyword>
<keyword id="KW-0689">Ribosomal protein</keyword>
<dbReference type="STRING" id="1001585.MDS_4275"/>
<dbReference type="GO" id="GO:1990904">
    <property type="term" value="C:ribonucleoprotein complex"/>
    <property type="evidence" value="ECO:0007669"/>
    <property type="project" value="UniProtKB-KW"/>
</dbReference>
<dbReference type="GO" id="GO:0005840">
    <property type="term" value="C:ribosome"/>
    <property type="evidence" value="ECO:0007669"/>
    <property type="project" value="UniProtKB-KW"/>
</dbReference>
<name>RL30_ECTME</name>